<feature type="chain" id="PRO_0000170677" description="Mannonate dehydratase">
    <location>
        <begin position="1"/>
        <end position="394"/>
    </location>
</feature>
<name>UXUA_MANSM</name>
<accession>Q65V66</accession>
<organism>
    <name type="scientific">Mannheimia succiniciproducens (strain KCTC 0769BP / MBEL55E)</name>
    <dbReference type="NCBI Taxonomy" id="221988"/>
    <lineage>
        <taxon>Bacteria</taxon>
        <taxon>Pseudomonadati</taxon>
        <taxon>Pseudomonadota</taxon>
        <taxon>Gammaproteobacteria</taxon>
        <taxon>Pasteurellales</taxon>
        <taxon>Pasteurellaceae</taxon>
        <taxon>Basfia</taxon>
    </lineage>
</organism>
<gene>
    <name evidence="1" type="primary">uxuA</name>
    <name type="ordered locus">MS0537</name>
</gene>
<keyword id="KW-0408">Iron</keyword>
<keyword id="KW-0456">Lyase</keyword>
<keyword id="KW-0464">Manganese</keyword>
<reference key="1">
    <citation type="journal article" date="2004" name="Nat. Biotechnol.">
        <title>The genome sequence of the capnophilic rumen bacterium Mannheimia succiniciproducens.</title>
        <authorList>
            <person name="Hong S.H."/>
            <person name="Kim J.S."/>
            <person name="Lee S.Y."/>
            <person name="In Y.H."/>
            <person name="Choi S.S."/>
            <person name="Rih J.-K."/>
            <person name="Kim C.H."/>
            <person name="Jeong H."/>
            <person name="Hur C.G."/>
            <person name="Kim J.J."/>
        </authorList>
    </citation>
    <scope>NUCLEOTIDE SEQUENCE [LARGE SCALE GENOMIC DNA]</scope>
    <source>
        <strain>KCTC 0769BP / MBEL55E</strain>
    </source>
</reference>
<proteinExistence type="inferred from homology"/>
<protein>
    <recommendedName>
        <fullName evidence="1">Mannonate dehydratase</fullName>
        <ecNumber evidence="1">4.2.1.8</ecNumber>
    </recommendedName>
    <alternativeName>
        <fullName evidence="1">D-mannonate hydro-lyase</fullName>
    </alternativeName>
</protein>
<dbReference type="EC" id="4.2.1.8" evidence="1"/>
<dbReference type="EMBL" id="AE016827">
    <property type="protein sequence ID" value="AAU37144.1"/>
    <property type="molecule type" value="Genomic_DNA"/>
</dbReference>
<dbReference type="RefSeq" id="WP_011199716.1">
    <property type="nucleotide sequence ID" value="NC_006300.1"/>
</dbReference>
<dbReference type="SMR" id="Q65V66"/>
<dbReference type="STRING" id="221988.MS0537"/>
<dbReference type="KEGG" id="msu:MS0537"/>
<dbReference type="eggNOG" id="COG1312">
    <property type="taxonomic scope" value="Bacteria"/>
</dbReference>
<dbReference type="HOGENOM" id="CLU_058621_2_0_6"/>
<dbReference type="OrthoDB" id="9780250at2"/>
<dbReference type="UniPathway" id="UPA00246"/>
<dbReference type="Proteomes" id="UP000000607">
    <property type="component" value="Chromosome"/>
</dbReference>
<dbReference type="GO" id="GO:0008198">
    <property type="term" value="F:ferrous iron binding"/>
    <property type="evidence" value="ECO:0007669"/>
    <property type="project" value="TreeGrafter"/>
</dbReference>
<dbReference type="GO" id="GO:0030145">
    <property type="term" value="F:manganese ion binding"/>
    <property type="evidence" value="ECO:0007669"/>
    <property type="project" value="TreeGrafter"/>
</dbReference>
<dbReference type="GO" id="GO:0008927">
    <property type="term" value="F:mannonate dehydratase activity"/>
    <property type="evidence" value="ECO:0007669"/>
    <property type="project" value="UniProtKB-UniRule"/>
</dbReference>
<dbReference type="GO" id="GO:0042840">
    <property type="term" value="P:D-glucuronate catabolic process"/>
    <property type="evidence" value="ECO:0007669"/>
    <property type="project" value="TreeGrafter"/>
</dbReference>
<dbReference type="FunFam" id="3.20.20.150:FF:000004">
    <property type="entry name" value="Mannonate dehydratase"/>
    <property type="match status" value="1"/>
</dbReference>
<dbReference type="FunFam" id="3.20.20.150:FF:000005">
    <property type="entry name" value="Mannonate dehydratase"/>
    <property type="match status" value="1"/>
</dbReference>
<dbReference type="Gene3D" id="3.20.20.150">
    <property type="entry name" value="Divalent-metal-dependent TIM barrel enzymes"/>
    <property type="match status" value="1"/>
</dbReference>
<dbReference type="HAMAP" id="MF_00106">
    <property type="entry name" value="UxuA"/>
    <property type="match status" value="1"/>
</dbReference>
<dbReference type="InterPro" id="IPR004628">
    <property type="entry name" value="Man_deHydtase"/>
</dbReference>
<dbReference type="InterPro" id="IPR036237">
    <property type="entry name" value="Xyl_isomerase-like_sf"/>
</dbReference>
<dbReference type="NCBIfam" id="NF003027">
    <property type="entry name" value="PRK03906.1"/>
    <property type="match status" value="1"/>
</dbReference>
<dbReference type="NCBIfam" id="TIGR00695">
    <property type="entry name" value="uxuA"/>
    <property type="match status" value="1"/>
</dbReference>
<dbReference type="PANTHER" id="PTHR30387">
    <property type="entry name" value="MANNONATE DEHYDRATASE"/>
    <property type="match status" value="1"/>
</dbReference>
<dbReference type="PANTHER" id="PTHR30387:SF2">
    <property type="entry name" value="MANNONATE DEHYDRATASE"/>
    <property type="match status" value="1"/>
</dbReference>
<dbReference type="Pfam" id="PF03786">
    <property type="entry name" value="UxuA"/>
    <property type="match status" value="1"/>
</dbReference>
<dbReference type="PIRSF" id="PIRSF016049">
    <property type="entry name" value="Man_dehyd"/>
    <property type="match status" value="1"/>
</dbReference>
<dbReference type="SUPFAM" id="SSF51658">
    <property type="entry name" value="Xylose isomerase-like"/>
    <property type="match status" value="1"/>
</dbReference>
<comment type="function">
    <text evidence="1">Catalyzes the dehydration of D-mannonate.</text>
</comment>
<comment type="catalytic activity">
    <reaction evidence="1">
        <text>D-mannonate = 2-dehydro-3-deoxy-D-gluconate + H2O</text>
        <dbReference type="Rhea" id="RHEA:20097"/>
        <dbReference type="ChEBI" id="CHEBI:15377"/>
        <dbReference type="ChEBI" id="CHEBI:17767"/>
        <dbReference type="ChEBI" id="CHEBI:57990"/>
        <dbReference type="EC" id="4.2.1.8"/>
    </reaction>
</comment>
<comment type="cofactor">
    <cofactor evidence="1">
        <name>Fe(2+)</name>
        <dbReference type="ChEBI" id="CHEBI:29033"/>
    </cofactor>
    <cofactor evidence="1">
        <name>Mn(2+)</name>
        <dbReference type="ChEBI" id="CHEBI:29035"/>
    </cofactor>
</comment>
<comment type="pathway">
    <text evidence="1">Carbohydrate metabolism; pentose and glucuronate interconversion.</text>
</comment>
<comment type="similarity">
    <text evidence="1">Belongs to the mannonate dehydratase family.</text>
</comment>
<evidence type="ECO:0000255" key="1">
    <source>
        <dbReference type="HAMAP-Rule" id="MF_00106"/>
    </source>
</evidence>
<sequence length="394" mass="44836">MEQTWRWYGPNDPVSLADIRQAGATGIVNALHHIPNGQVWSVEEIEKRKAIIEAAGLTWSVVESVPVHEEIKTQTGNYKTWIENYKQTLRNLAQCGIDTVCYNFMPVLDWTRTDLAYELPDGSKALRFDQIAFAAFELHILKRPGAEQTYTAEEQKQAKAYFDKMSDADIKQLTSNIIAGLPGAEEGYTLEEFQGQLDRYKDISPEKFRTHLAYFLNEIIPVAQEVGIKMAVHPDDPPRPILGLPRIVSTIEDMQWYVDTCDLPANGFTMCTGSYGVRADNDLVKMTEKFGDRIYFAHLRSTCREDNPLTFHEAAHLQGDVDMFNVVKALLTEEYRRKANGETRLIPMRPDHGHQMLDDLKKKTNPGYSAIGRLKGLAEFRGLEMALKKVFFEK</sequence>